<organism>
    <name type="scientific">Drosophila grimshawi</name>
    <name type="common">Hawaiian fruit fly</name>
    <name type="synonym">Idiomyia grimshawi</name>
    <dbReference type="NCBI Taxonomy" id="7222"/>
    <lineage>
        <taxon>Eukaryota</taxon>
        <taxon>Metazoa</taxon>
        <taxon>Ecdysozoa</taxon>
        <taxon>Arthropoda</taxon>
        <taxon>Hexapoda</taxon>
        <taxon>Insecta</taxon>
        <taxon>Pterygota</taxon>
        <taxon>Neoptera</taxon>
        <taxon>Endopterygota</taxon>
        <taxon>Diptera</taxon>
        <taxon>Brachycera</taxon>
        <taxon>Muscomorpha</taxon>
        <taxon>Ephydroidea</taxon>
        <taxon>Drosophilidae</taxon>
        <taxon>Drosophila</taxon>
        <taxon>Hawaiian Drosophila</taxon>
    </lineage>
</organism>
<keyword id="KW-1003">Cell membrane</keyword>
<keyword id="KW-0966">Cell projection</keyword>
<keyword id="KW-0217">Developmental protein</keyword>
<keyword id="KW-0256">Endoplasmic reticulum</keyword>
<keyword id="KW-0967">Endosome</keyword>
<keyword id="KW-0325">Glycoprotein</keyword>
<keyword id="KW-0333">Golgi apparatus</keyword>
<keyword id="KW-0472">Membrane</keyword>
<keyword id="KW-0628">Postsynaptic cell membrane</keyword>
<keyword id="KW-1185">Reference proteome</keyword>
<keyword id="KW-0709">Segmentation polarity protein</keyword>
<keyword id="KW-0770">Synapse</keyword>
<keyword id="KW-0812">Transmembrane</keyword>
<keyword id="KW-1133">Transmembrane helix</keyword>
<keyword id="KW-0879">Wnt signaling pathway</keyword>
<proteinExistence type="inferred from homology"/>
<evidence type="ECO:0000250" key="1"/>
<evidence type="ECO:0000250" key="2">
    <source>
        <dbReference type="UniProtKB" id="Q5T9L3"/>
    </source>
</evidence>
<evidence type="ECO:0000250" key="3">
    <source>
        <dbReference type="UniProtKB" id="Q95ST2"/>
    </source>
</evidence>
<evidence type="ECO:0000255" key="4"/>
<evidence type="ECO:0000305" key="5"/>
<evidence type="ECO:0000312" key="6">
    <source>
        <dbReference type="EMBL" id="EDV97133.1"/>
    </source>
</evidence>
<comment type="function">
    <text evidence="1">A segment polarity gene required for wingless (wg)-dependent patterning processes, acting in both wg-sending cells and wg-target cells. In non-neuronal cells wls directs wg secretion. The wls traffic loop encompasses the Golgi, the cell surface, an endocytic compartment and a retrograde route leading back to the Golgi, and involves clathrin-mediated endocytosis and the retromer complex (a conserved protein complex consisting of Vps35 and Vps26). In neuronal cells (the larval motorneuron NMJ), the wg signal moves across the synapse via the release of wls-containing exosome-like vesicles. Postsynaptic wls is required for the trafficking of fz2 through the fz2-interacting protein Grip (By similarity).</text>
</comment>
<comment type="subunit">
    <text evidence="1">Interacts with wg; in the Golgi. Interacts with Vps35, a component of the retromer complex; wls stability is regulated by Vps35 (By similarity).</text>
</comment>
<comment type="subcellular location">
    <subcellularLocation>
        <location evidence="3">Presynaptic cell membrane</location>
        <topology evidence="3">Multi-pass membrane protein</topology>
    </subcellularLocation>
    <subcellularLocation>
        <location evidence="3">Postsynaptic cell membrane</location>
        <topology evidence="3">Multi-pass membrane protein</topology>
    </subcellularLocation>
    <subcellularLocation>
        <location evidence="3">Cell membrane</location>
        <topology evidence="3">Multi-pass membrane protein</topology>
    </subcellularLocation>
    <subcellularLocation>
        <location evidence="3">Endoplasmic reticulum membrane</location>
        <topology evidence="3">Multi-pass membrane protein</topology>
    </subcellularLocation>
    <subcellularLocation>
        <location evidence="3">Endosome membrane</location>
        <topology evidence="3">Multi-pass membrane protein</topology>
    </subcellularLocation>
    <subcellularLocation>
        <location evidence="3">Golgi apparatus membrane</location>
        <topology evidence="3">Multi-pass membrane protein</topology>
    </subcellularLocation>
    <text evidence="1">In non-neuronal cells, wls binds to wg in the Golgi and accompanies it to the plasma membrane where the two proteins dissociate. Wg is secreted and wls is then internalized and returns to the Golgi apparatus in a retromer-dependent manner. Wls and wg colocalize in the Golgi apparatus in wg-producing cells, and reduced expression is seen in non-producing cells. Endoplasmic reticulum expression is unchanged in wg-producing versus non-producing cells. In neuronal cells, wls is localized both pre- and postsynaptically and is transferred trans-synaptically from the pre- to the postsynaptic compartment (By similarity).</text>
</comment>
<comment type="similarity">
    <text evidence="4">Belongs to the wntless family.</text>
</comment>
<comment type="sequence caution" evidence="5">
    <conflict type="erroneous gene model prediction">
        <sequence resource="EMBL-CDS" id="EDV97133"/>
    </conflict>
</comment>
<reference evidence="6" key="1">
    <citation type="journal article" date="2007" name="Nature">
        <title>Evolution of genes and genomes on the Drosophila phylogeny.</title>
        <authorList>
            <consortium name="Drosophila 12 genomes consortium"/>
        </authorList>
    </citation>
    <scope>NUCLEOTIDE SEQUENCE [LARGE SCALE GENOMIC DNA]</scope>
    <source>
        <strain evidence="6">Tucson 15287-2541.00</strain>
    </source>
</reference>
<gene>
    <name evidence="3" type="primary">wls</name>
    <name type="ORF">GH16661</name>
</gene>
<name>WLS_DROGR</name>
<protein>
    <recommendedName>
        <fullName evidence="3">Protein wntless</fullName>
    </recommendedName>
</protein>
<accession>B4J2W3</accession>
<feature type="chain" id="PRO_0000390663" description="Protein wntless" evidence="4">
    <location>
        <begin position="1"/>
        <end position="562"/>
    </location>
</feature>
<feature type="topological domain" description="Cytoplasmic" evidence="2">
    <location>
        <begin position="1"/>
        <end position="15"/>
    </location>
</feature>
<feature type="transmembrane region" description="Helical; Name=1" evidence="4">
    <location>
        <begin position="16"/>
        <end position="36"/>
    </location>
</feature>
<feature type="topological domain" description="Lumenal" evidence="2">
    <location>
        <begin position="37"/>
        <end position="239"/>
    </location>
</feature>
<feature type="transmembrane region" description="Helical; Name=2" evidence="4">
    <location>
        <begin position="240"/>
        <end position="260"/>
    </location>
</feature>
<feature type="topological domain" description="Cytoplasmic" evidence="2">
    <location>
        <begin position="261"/>
        <end position="275"/>
    </location>
</feature>
<feature type="transmembrane region" description="Helical; Name=3" evidence="4">
    <location>
        <begin position="276"/>
        <end position="296"/>
    </location>
</feature>
<feature type="topological domain" description="Lumenal" evidence="2">
    <location>
        <begin position="297"/>
        <end position="311"/>
    </location>
</feature>
<feature type="transmembrane region" description="Helical; Name=4" evidence="4">
    <location>
        <begin position="312"/>
        <end position="332"/>
    </location>
</feature>
<feature type="topological domain" description="Cytoplasmic" evidence="2">
    <location>
        <begin position="333"/>
        <end position="344"/>
    </location>
</feature>
<feature type="transmembrane region" description="Helical; Name=5" evidence="4">
    <location>
        <begin position="345"/>
        <end position="365"/>
    </location>
</feature>
<feature type="topological domain" description="Lumenal" evidence="2">
    <location>
        <begin position="366"/>
        <end position="390"/>
    </location>
</feature>
<feature type="transmembrane region" description="Helical; Name=6" evidence="4">
    <location>
        <begin position="391"/>
        <end position="411"/>
    </location>
</feature>
<feature type="topological domain" description="Cytoplasmic" evidence="2">
    <location>
        <begin position="412"/>
        <end position="441"/>
    </location>
</feature>
<feature type="transmembrane region" description="Helical; Name=7" evidence="4">
    <location>
        <begin position="442"/>
        <end position="462"/>
    </location>
</feature>
<feature type="topological domain" description="Lumenal" evidence="2">
    <location>
        <begin position="463"/>
        <end position="482"/>
    </location>
</feature>
<feature type="transmembrane region" description="Helical; Name=8" evidence="4">
    <location>
        <begin position="483"/>
        <end position="503"/>
    </location>
</feature>
<feature type="topological domain" description="Cytoplasmic" evidence="2">
    <location>
        <begin position="504"/>
        <end position="562"/>
    </location>
</feature>
<feature type="glycosylation site" description="N-linked (GlcNAc...) asparagine" evidence="4">
    <location>
        <position position="58"/>
    </location>
</feature>
<feature type="glycosylation site" description="N-linked (GlcNAc...) asparagine" evidence="4">
    <location>
        <position position="103"/>
    </location>
</feature>
<sequence>MSGTILENLSGRKLSILVSSLMLCQVVCFLMGGLFAPVPAGHQTVLGSKCRDVPGRQNDTSFFLYSRGNGACKSLQDIDIEQDELKMANQLVYVFQMPLPRDNNTLQYSRWQQNLIGVLQVDIAYDSASELREPPKELQLTIDTRLAYRNQKDADTDWKLYAHSVEQRYLDCHASHVGRLETLYTCDIIPLFELGALHHNFYLLNLRFPMDTPKQMNLQFGHMHDLTLTAIHQNGGFTQVWLVLKTLLFPFVIGIMMWFWRRVHILQRSPALLEYMLFYLGGALSFLNLPLELLTLGVEMPYMLLLSDVRQGIFYAMLLSFWLVFAGEHMLIQDSPSKSTIRSRYWKHLSAVVVGCISLFVFDICERGVQMRNPFYSIWTTPLGAKVAMSFIVLAGVSAAIYFLFLCFMVWKVFKDIGDKRTSLPSMSQARRLHYEGLIYRFKFLMLATLLCAGLTVAGFIMGQMAEGHWKWNENIEIQLTSAFLTGVYGMWNIYIFALIILYAPSHKQWPTMRHSDETTQSNENIVASAASEEIEFSNLPSDSNPSEISSLTSFTRKVAFD</sequence>
<dbReference type="EMBL" id="CH916366">
    <property type="protein sequence ID" value="EDV97133.1"/>
    <property type="status" value="ALT_SEQ"/>
    <property type="molecule type" value="Genomic_DNA"/>
</dbReference>
<dbReference type="RefSeq" id="XP_001984785.1">
    <property type="nucleotide sequence ID" value="XM_001984749.1"/>
</dbReference>
<dbReference type="SMR" id="B4J2W3"/>
<dbReference type="FunCoup" id="B4J2W3">
    <property type="interactions" value="612"/>
</dbReference>
<dbReference type="STRING" id="7222.B4J2W3"/>
<dbReference type="GlyCosmos" id="B4J2W3">
    <property type="glycosylation" value="2 sites, No reported glycans"/>
</dbReference>
<dbReference type="EnsemblMetazoa" id="FBtr0455042">
    <property type="protein sequence ID" value="FBpp0405639"/>
    <property type="gene ID" value="FBgn0124132"/>
</dbReference>
<dbReference type="EnsemblMetazoa" id="XM_032741592.2">
    <property type="protein sequence ID" value="XP_032597483.1"/>
    <property type="gene ID" value="LOC6557976"/>
</dbReference>
<dbReference type="eggNOG" id="ENOG502QSE2">
    <property type="taxonomic scope" value="Eukaryota"/>
</dbReference>
<dbReference type="InParanoid" id="B4J2W3"/>
<dbReference type="OrthoDB" id="5804250at2759"/>
<dbReference type="Proteomes" id="UP000001070">
    <property type="component" value="Unassembled WGS sequence"/>
</dbReference>
<dbReference type="GO" id="GO:0042995">
    <property type="term" value="C:cell projection"/>
    <property type="evidence" value="ECO:0007669"/>
    <property type="project" value="UniProtKB-KW"/>
</dbReference>
<dbReference type="GO" id="GO:0005769">
    <property type="term" value="C:early endosome"/>
    <property type="evidence" value="ECO:0007669"/>
    <property type="project" value="EnsemblMetazoa"/>
</dbReference>
<dbReference type="GO" id="GO:0005789">
    <property type="term" value="C:endoplasmic reticulum membrane"/>
    <property type="evidence" value="ECO:0000250"/>
    <property type="project" value="UniProtKB"/>
</dbReference>
<dbReference type="GO" id="GO:0010008">
    <property type="term" value="C:endosome membrane"/>
    <property type="evidence" value="ECO:0000250"/>
    <property type="project" value="UniProtKB"/>
</dbReference>
<dbReference type="GO" id="GO:0070062">
    <property type="term" value="C:extracellular exosome"/>
    <property type="evidence" value="ECO:0007669"/>
    <property type="project" value="EnsemblMetazoa"/>
</dbReference>
<dbReference type="GO" id="GO:0000139">
    <property type="term" value="C:Golgi membrane"/>
    <property type="evidence" value="ECO:0000250"/>
    <property type="project" value="UniProtKB"/>
</dbReference>
<dbReference type="GO" id="GO:0005771">
    <property type="term" value="C:multivesicular body"/>
    <property type="evidence" value="ECO:0007669"/>
    <property type="project" value="EnsemblMetazoa"/>
</dbReference>
<dbReference type="GO" id="GO:0031594">
    <property type="term" value="C:neuromuscular junction"/>
    <property type="evidence" value="ECO:0000250"/>
    <property type="project" value="UniProtKB"/>
</dbReference>
<dbReference type="GO" id="GO:0005886">
    <property type="term" value="C:plasma membrane"/>
    <property type="evidence" value="ECO:0000250"/>
    <property type="project" value="UniProtKB"/>
</dbReference>
<dbReference type="GO" id="GO:0045211">
    <property type="term" value="C:postsynaptic membrane"/>
    <property type="evidence" value="ECO:0000250"/>
    <property type="project" value="UniProtKB"/>
</dbReference>
<dbReference type="GO" id="GO:0042734">
    <property type="term" value="C:presynaptic membrane"/>
    <property type="evidence" value="ECO:0000250"/>
    <property type="project" value="UniProtKB"/>
</dbReference>
<dbReference type="GO" id="GO:0030672">
    <property type="term" value="C:synaptic vesicle membrane"/>
    <property type="evidence" value="ECO:0000250"/>
    <property type="project" value="UniProtKB"/>
</dbReference>
<dbReference type="GO" id="GO:0017147">
    <property type="term" value="F:Wnt-protein binding"/>
    <property type="evidence" value="ECO:0000250"/>
    <property type="project" value="UniProtKB"/>
</dbReference>
<dbReference type="GO" id="GO:0001745">
    <property type="term" value="P:compound eye morphogenesis"/>
    <property type="evidence" value="ECO:0007669"/>
    <property type="project" value="EnsemblMetazoa"/>
</dbReference>
<dbReference type="GO" id="GO:0035017">
    <property type="term" value="P:cuticle pattern formation"/>
    <property type="evidence" value="ECO:0007669"/>
    <property type="project" value="EnsemblMetazoa"/>
</dbReference>
<dbReference type="GO" id="GO:0043001">
    <property type="term" value="P:Golgi to plasma membrane protein transport"/>
    <property type="evidence" value="ECO:0007669"/>
    <property type="project" value="EnsemblMetazoa"/>
</dbReference>
<dbReference type="GO" id="GO:0007480">
    <property type="term" value="P:imaginal disc-derived leg morphogenesis"/>
    <property type="evidence" value="ECO:0007669"/>
    <property type="project" value="EnsemblMetazoa"/>
</dbReference>
<dbReference type="GO" id="GO:0008587">
    <property type="term" value="P:imaginal disc-derived wing margin morphogenesis"/>
    <property type="evidence" value="ECO:0000250"/>
    <property type="project" value="UniProtKB"/>
</dbReference>
<dbReference type="GO" id="GO:0006886">
    <property type="term" value="P:intracellular protein transport"/>
    <property type="evidence" value="ECO:0007669"/>
    <property type="project" value="TreeGrafter"/>
</dbReference>
<dbReference type="GO" id="GO:0050714">
    <property type="term" value="P:positive regulation of protein secretion"/>
    <property type="evidence" value="ECO:0000250"/>
    <property type="project" value="UniProtKB"/>
</dbReference>
<dbReference type="GO" id="GO:0061357">
    <property type="term" value="P:positive regulation of Wnt protein secretion"/>
    <property type="evidence" value="ECO:0007669"/>
    <property type="project" value="EnsemblMetazoa"/>
</dbReference>
<dbReference type="GO" id="GO:0030177">
    <property type="term" value="P:positive regulation of Wnt signaling pathway"/>
    <property type="evidence" value="ECO:0000250"/>
    <property type="project" value="UniProtKB"/>
</dbReference>
<dbReference type="GO" id="GO:0033157">
    <property type="term" value="P:regulation of intracellular protein transport"/>
    <property type="evidence" value="ECO:0000250"/>
    <property type="project" value="UniProtKB"/>
</dbReference>
<dbReference type="GO" id="GO:0007367">
    <property type="term" value="P:segment polarity determination"/>
    <property type="evidence" value="ECO:0000250"/>
    <property type="project" value="UniProtKB"/>
</dbReference>
<dbReference type="GO" id="GO:0099157">
    <property type="term" value="P:trans-synaptic signaling via exosome"/>
    <property type="evidence" value="ECO:0007669"/>
    <property type="project" value="EnsemblMetazoa"/>
</dbReference>
<dbReference type="GO" id="GO:0061355">
    <property type="term" value="P:Wnt protein secretion"/>
    <property type="evidence" value="ECO:0007669"/>
    <property type="project" value="EnsemblMetazoa"/>
</dbReference>
<dbReference type="GO" id="GO:0016055">
    <property type="term" value="P:Wnt signaling pathway"/>
    <property type="evidence" value="ECO:0007669"/>
    <property type="project" value="UniProtKB-KW"/>
</dbReference>
<dbReference type="InterPro" id="IPR047843">
    <property type="entry name" value="WLS-like_TM"/>
</dbReference>
<dbReference type="InterPro" id="IPR053936">
    <property type="entry name" value="WLS_GOLD"/>
</dbReference>
<dbReference type="InterPro" id="IPR009551">
    <property type="entry name" value="Wntless"/>
</dbReference>
<dbReference type="PANTHER" id="PTHR13449">
    <property type="entry name" value="INTEGRAL MEMBRANE PROTEIN GPR177"/>
    <property type="match status" value="1"/>
</dbReference>
<dbReference type="PANTHER" id="PTHR13449:SF2">
    <property type="entry name" value="PROTEIN WNTLESS HOMOLOG"/>
    <property type="match status" value="1"/>
</dbReference>
<dbReference type="Pfam" id="PF06664">
    <property type="entry name" value="WLS-like_TM"/>
    <property type="match status" value="1"/>
</dbReference>
<dbReference type="Pfam" id="PF21883">
    <property type="entry name" value="WLS_GOLD"/>
    <property type="match status" value="1"/>
</dbReference>